<name>MOG_PONAB</name>
<organism>
    <name type="scientific">Pongo abelii</name>
    <name type="common">Sumatran orangutan</name>
    <name type="synonym">Pongo pygmaeus abelii</name>
    <dbReference type="NCBI Taxonomy" id="9601"/>
    <lineage>
        <taxon>Eukaryota</taxon>
        <taxon>Metazoa</taxon>
        <taxon>Chordata</taxon>
        <taxon>Craniata</taxon>
        <taxon>Vertebrata</taxon>
        <taxon>Euteleostomi</taxon>
        <taxon>Mammalia</taxon>
        <taxon>Eutheria</taxon>
        <taxon>Euarchontoglires</taxon>
        <taxon>Primates</taxon>
        <taxon>Haplorrhini</taxon>
        <taxon>Catarrhini</taxon>
        <taxon>Hominidae</taxon>
        <taxon>Pongo</taxon>
    </lineage>
</organism>
<comment type="function">
    <text evidence="1">Minor component of the myelin sheath. May be involved in completion and/or maintenance of the myelin sheath and in cell-cell communication. Mediates homophilic cell-cell adhesion (By similarity).</text>
</comment>
<comment type="subunit">
    <text evidence="1">Homodimer.</text>
</comment>
<comment type="subcellular location">
    <subcellularLocation>
        <location evidence="4">Membrane</location>
        <topology evidence="4">Multi-pass membrane protein</topology>
    </subcellularLocation>
</comment>
<comment type="similarity">
    <text evidence="4">Belongs to the immunoglobulin superfamily. BTN/MOG family.</text>
</comment>
<comment type="caution">
    <text evidence="4">Do not confuse myelin-oligodendrocyte glycoprotein (MOG) with oligodendrocyte-myelin glycoprotein (OMG).</text>
</comment>
<sequence length="246" mass="28050">MASLSRPSLPSCLCSFLLLLLQVSSSYAGQFRVIGPRHPIRALVGDEVELPCRISPGKNATGMEVGWYRPPFSRVVHLYRNGKDQDGEQAPEYRGRTELLKDAIGEGKVTLRIRNVRFSDEGGFTCFFRDHSYQEEAAMELKVEDPFYWVSPGVLVLLAVLPVLLLQIAVGLVFLCLQYRLRGKLRAEIENLHRTFDPHFLRVPCWKITLFVIVPVLGPLVALIICYNWLHRRLAGQFLEELRNPF</sequence>
<proteinExistence type="evidence at transcript level"/>
<evidence type="ECO:0000250" key="1"/>
<evidence type="ECO:0000255" key="2"/>
<evidence type="ECO:0000255" key="3">
    <source>
        <dbReference type="PROSITE-ProRule" id="PRU00114"/>
    </source>
</evidence>
<evidence type="ECO:0000305" key="4"/>
<gene>
    <name type="primary">MOG</name>
</gene>
<reference key="1">
    <citation type="submission" date="2004-11" db="EMBL/GenBank/DDBJ databases">
        <authorList>
            <consortium name="The German cDNA consortium"/>
        </authorList>
    </citation>
    <scope>NUCLEOTIDE SEQUENCE [LARGE SCALE MRNA]</scope>
    <source>
        <tissue>Brain cortex</tissue>
    </source>
</reference>
<feature type="signal peptide" evidence="2">
    <location>
        <begin position="1"/>
        <end position="28"/>
    </location>
</feature>
<feature type="chain" id="PRO_0000274530" description="Myelin-oligodendrocyte glycoprotein">
    <location>
        <begin position="29"/>
        <end position="246"/>
    </location>
</feature>
<feature type="topological domain" description="Extracellular" evidence="2">
    <location>
        <begin position="29"/>
        <end position="153"/>
    </location>
</feature>
<feature type="transmembrane region" description="Helical" evidence="2">
    <location>
        <begin position="154"/>
        <end position="174"/>
    </location>
</feature>
<feature type="topological domain" description="Cytoplasmic" evidence="2">
    <location>
        <begin position="175"/>
        <end position="209"/>
    </location>
</feature>
<feature type="transmembrane region" description="Helical" evidence="2">
    <location>
        <begin position="210"/>
        <end position="230"/>
    </location>
</feature>
<feature type="topological domain" description="Extracellular" evidence="2">
    <location>
        <begin position="231"/>
        <end position="246"/>
    </location>
</feature>
<feature type="domain" description="Ig-like V-type">
    <location>
        <begin position="30"/>
        <end position="144"/>
    </location>
</feature>
<feature type="glycosylation site" description="N-linked (GlcNAc...) asparagine" evidence="2">
    <location>
        <position position="59"/>
    </location>
</feature>
<feature type="disulfide bond" evidence="3">
    <location>
        <begin position="52"/>
        <end position="126"/>
    </location>
</feature>
<protein>
    <recommendedName>
        <fullName>Myelin-oligodendrocyte glycoprotein</fullName>
    </recommendedName>
</protein>
<keyword id="KW-0130">Cell adhesion</keyword>
<keyword id="KW-1015">Disulfide bond</keyword>
<keyword id="KW-0325">Glycoprotein</keyword>
<keyword id="KW-0393">Immunoglobulin domain</keyword>
<keyword id="KW-0472">Membrane</keyword>
<keyword id="KW-1185">Reference proteome</keyword>
<keyword id="KW-0732">Signal</keyword>
<keyword id="KW-0812">Transmembrane</keyword>
<keyword id="KW-1133">Transmembrane helix</keyword>
<dbReference type="EMBL" id="CR859533">
    <property type="protein sequence ID" value="CAH91700.1"/>
    <property type="molecule type" value="mRNA"/>
</dbReference>
<dbReference type="RefSeq" id="NP_001125993.1">
    <property type="nucleotide sequence ID" value="NM_001132521.1"/>
</dbReference>
<dbReference type="SMR" id="Q5R960"/>
<dbReference type="FunCoup" id="Q5R960">
    <property type="interactions" value="425"/>
</dbReference>
<dbReference type="STRING" id="9601.ENSPPYP00000018325"/>
<dbReference type="GlyCosmos" id="Q5R960">
    <property type="glycosylation" value="1 site, No reported glycans"/>
</dbReference>
<dbReference type="GeneID" id="100172932"/>
<dbReference type="KEGG" id="pon:100172932"/>
<dbReference type="CTD" id="4340"/>
<dbReference type="eggNOG" id="ENOG502SQC1">
    <property type="taxonomic scope" value="Eukaryota"/>
</dbReference>
<dbReference type="InParanoid" id="Q5R960"/>
<dbReference type="OrthoDB" id="9049620at2759"/>
<dbReference type="Proteomes" id="UP000001595">
    <property type="component" value="Unplaced"/>
</dbReference>
<dbReference type="GO" id="GO:0009897">
    <property type="term" value="C:external side of plasma membrane"/>
    <property type="evidence" value="ECO:0007669"/>
    <property type="project" value="TreeGrafter"/>
</dbReference>
<dbReference type="GO" id="GO:0005102">
    <property type="term" value="F:signaling receptor binding"/>
    <property type="evidence" value="ECO:0007669"/>
    <property type="project" value="TreeGrafter"/>
</dbReference>
<dbReference type="GO" id="GO:0007155">
    <property type="term" value="P:cell adhesion"/>
    <property type="evidence" value="ECO:0007669"/>
    <property type="project" value="UniProtKB-KW"/>
</dbReference>
<dbReference type="GO" id="GO:0001817">
    <property type="term" value="P:regulation of cytokine production"/>
    <property type="evidence" value="ECO:0007669"/>
    <property type="project" value="TreeGrafter"/>
</dbReference>
<dbReference type="GO" id="GO:0050852">
    <property type="term" value="P:T cell receptor signaling pathway"/>
    <property type="evidence" value="ECO:0007669"/>
    <property type="project" value="TreeGrafter"/>
</dbReference>
<dbReference type="CDD" id="cd05713">
    <property type="entry name" value="IgV_MOG_like"/>
    <property type="match status" value="1"/>
</dbReference>
<dbReference type="FunFam" id="2.60.40.10:FF:000183">
    <property type="entry name" value="Myelin-oligodendrocyte glycoprotein"/>
    <property type="match status" value="1"/>
</dbReference>
<dbReference type="Gene3D" id="2.60.40.10">
    <property type="entry name" value="Immunoglobulins"/>
    <property type="match status" value="1"/>
</dbReference>
<dbReference type="InterPro" id="IPR007110">
    <property type="entry name" value="Ig-like_dom"/>
</dbReference>
<dbReference type="InterPro" id="IPR036179">
    <property type="entry name" value="Ig-like_dom_sf"/>
</dbReference>
<dbReference type="InterPro" id="IPR013783">
    <property type="entry name" value="Ig-like_fold"/>
</dbReference>
<dbReference type="InterPro" id="IPR003599">
    <property type="entry name" value="Ig_sub"/>
</dbReference>
<dbReference type="InterPro" id="IPR013106">
    <property type="entry name" value="Ig_V-set"/>
</dbReference>
<dbReference type="InterPro" id="IPR050504">
    <property type="entry name" value="IgSF_BTN/MOG"/>
</dbReference>
<dbReference type="InterPro" id="IPR016663">
    <property type="entry name" value="Myelin-oligodendrocyte_glycop"/>
</dbReference>
<dbReference type="PANTHER" id="PTHR24100">
    <property type="entry name" value="BUTYROPHILIN"/>
    <property type="match status" value="1"/>
</dbReference>
<dbReference type="PANTHER" id="PTHR24100:SF71">
    <property type="entry name" value="MYELIN-OLIGODENDROCYTE GLYCOPROTEIN"/>
    <property type="match status" value="1"/>
</dbReference>
<dbReference type="Pfam" id="PF07686">
    <property type="entry name" value="V-set"/>
    <property type="match status" value="1"/>
</dbReference>
<dbReference type="PIRSF" id="PIRSF016522">
    <property type="entry name" value="MOG"/>
    <property type="match status" value="1"/>
</dbReference>
<dbReference type="SMART" id="SM00409">
    <property type="entry name" value="IG"/>
    <property type="match status" value="1"/>
</dbReference>
<dbReference type="SMART" id="SM00406">
    <property type="entry name" value="IGv"/>
    <property type="match status" value="1"/>
</dbReference>
<dbReference type="SUPFAM" id="SSF48726">
    <property type="entry name" value="Immunoglobulin"/>
    <property type="match status" value="1"/>
</dbReference>
<dbReference type="PROSITE" id="PS50835">
    <property type="entry name" value="IG_LIKE"/>
    <property type="match status" value="1"/>
</dbReference>
<accession>Q5R960</accession>